<reference key="1">
    <citation type="journal article" date="2009" name="Toxicon">
        <title>Pruning nature: biodiversity-derived discovery of novel sodium channel blocking conotoxins from Conus bullatus.</title>
        <authorList>
            <person name="Holford M."/>
            <person name="Zhang M.-M."/>
            <person name="Gowd K.H."/>
            <person name="Azam L."/>
            <person name="Green B.R."/>
            <person name="Watkins M."/>
            <person name="Ownby J.-P."/>
            <person name="Yoshikami D."/>
            <person name="Bulaj G."/>
            <person name="Olivera B.M."/>
        </authorList>
    </citation>
    <scope>NUCLEOTIDE SEQUENCE [MRNA]</scope>
    <scope>SYNTHESIS OF 52-77</scope>
    <scope>FUNCTION</scope>
    <scope>AMIDATION AT CYS-77</scope>
</reference>
<reference key="2">
    <citation type="journal article" date="2012" name="J. Biol. Chem.">
        <title>Design of bioactive peptides from naturally occurring mu-conotoxin structures.</title>
        <authorList>
            <person name="Stevens M."/>
            <person name="Peigneur S."/>
            <person name="Dyubankova N."/>
            <person name="Lescrinier E."/>
            <person name="Herdewijn P."/>
            <person name="Tytgat J."/>
        </authorList>
    </citation>
    <scope>STRUCTURE BY NMR OF MUTANT R2-MIDI BUIIIC</scope>
    <scope>FUNCTION OF MUTANT R2-MIDI BUIIIC</scope>
    <scope>MUTAGENESIS OF 64-ARG-GLY-65 AND CYS-70</scope>
    <scope>DISULFIDE BOND OF MUTANT R2-MIDI BUIIIC</scope>
</reference>
<evidence type="ECO:0000250" key="1"/>
<evidence type="ECO:0000250" key="2">
    <source>
        <dbReference type="UniProtKB" id="C1J5M6"/>
    </source>
</evidence>
<evidence type="ECO:0000255" key="3"/>
<evidence type="ECO:0000269" key="4">
    <source>
    </source>
</evidence>
<evidence type="ECO:0000269" key="5">
    <source>
    </source>
</evidence>
<evidence type="ECO:0000303" key="6">
    <source>
    </source>
</evidence>
<evidence type="ECO:0000305" key="7"/>
<evidence type="ECO:0000305" key="8">
    <source>
    </source>
</evidence>
<proteinExistence type="evidence at protein level"/>
<keyword id="KW-0002">3D-structure</keyword>
<keyword id="KW-0027">Amidation</keyword>
<keyword id="KW-0165">Cleavage on pair of basic residues</keyword>
<keyword id="KW-1015">Disulfide bond</keyword>
<keyword id="KW-0872">Ion channel impairing toxin</keyword>
<keyword id="KW-0528">Neurotoxin</keyword>
<keyword id="KW-0964">Secreted</keyword>
<keyword id="KW-0732">Signal</keyword>
<keyword id="KW-0800">Toxin</keyword>
<keyword id="KW-0738">Voltage-gated sodium channel impairing toxin</keyword>
<organism>
    <name type="scientific">Conus bullatus</name>
    <name type="common">Bubble cone</name>
    <dbReference type="NCBI Taxonomy" id="89438"/>
    <lineage>
        <taxon>Eukaryota</taxon>
        <taxon>Metazoa</taxon>
        <taxon>Spiralia</taxon>
        <taxon>Lophotrochozoa</taxon>
        <taxon>Mollusca</taxon>
        <taxon>Gastropoda</taxon>
        <taxon>Caenogastropoda</taxon>
        <taxon>Neogastropoda</taxon>
        <taxon>Conoidea</taxon>
        <taxon>Conidae</taxon>
        <taxon>Conus</taxon>
        <taxon>Textilia</taxon>
    </lineage>
</organism>
<name>CM3C_CONBU</name>
<feature type="signal peptide" evidence="3">
    <location>
        <begin position="1"/>
        <end position="22"/>
    </location>
</feature>
<feature type="propeptide" id="PRO_0000384435" evidence="1">
    <location>
        <begin position="23"/>
        <end position="51"/>
    </location>
</feature>
<feature type="peptide" id="PRO_0000384436" description="Mu-conotoxin BuIIIC" evidence="8">
    <location>
        <begin position="52"/>
        <end position="77"/>
    </location>
</feature>
<feature type="modified residue" description="Cysteine amide" evidence="8">
    <location>
        <position position="77"/>
    </location>
</feature>
<feature type="disulfide bond" evidence="2">
    <location>
        <begin position="56"/>
        <end position="70"/>
    </location>
</feature>
<feature type="disulfide bond" evidence="2">
    <location>
        <begin position="57"/>
        <end position="76"/>
    </location>
</feature>
<feature type="disulfide bond" evidence="2">
    <location>
        <begin position="66"/>
        <end position="77"/>
    </location>
</feature>
<feature type="mutagenesis site" description="In R2-Midi BuIIIC; potently and selectively inhibits Nav1.2/SCN2A; when associated with 64-C-N-65 and A-70." evidence="5">
    <location>
        <begin position="52"/>
        <end position="63"/>
    </location>
</feature>
<feature type="mutagenesis site" description="In R2-Midi BuIIIC; potently and selectively inhibits Nav1.2/SCN2A; when associated with 52-R-G-63 DEL and A-70." evidence="5">
    <original>RG</original>
    <variation>CN</variation>
    <location>
        <begin position="64"/>
        <end position="65"/>
    </location>
</feature>
<feature type="mutagenesis site" description="In R2-Midi BuIIIC; potently and selectively inhibits Nav1.2/SCN2A; when associated with 52-R-G-63 DEL and 64-C-N-65." evidence="5">
    <original>C</original>
    <variation>A</variation>
    <location>
        <position position="70"/>
    </location>
</feature>
<comment type="function">
    <text evidence="4">Mu-conotoxins block voltage-gated sodium channels. Extremely potent inhibitor of Nav1.4/SCN4A (96% inhibition at 1 uM). The inhibition is very slowly reversible.</text>
</comment>
<comment type="subcellular location">
    <subcellularLocation>
        <location evidence="8">Secreted</location>
    </subcellularLocation>
</comment>
<comment type="tissue specificity">
    <text evidence="8">Expressed by the venom duct.</text>
</comment>
<comment type="domain">
    <text evidence="7">The cysteine framework is III (CC-C-C-CC). Classified in the M-5 branch, since 5 residues stand between the fourth and the fifth cysteine residues.</text>
</comment>
<comment type="miscellaneous">
    <text evidence="5">The analog R2-Midi BuIIIC is a potent inhibitor of Nav1.2/SCN2A (IC(50)=34.1 nM) (PubMed:22773842). It also inhibits Nav1.3/SCN3A (10% inhibition at 75 nM), Nav1.4/SCN4A (45% inhibition at 75 nM), Nav1.6/SCN8A (45% inhibition at 75 nM), but does not inhibit Nav1.5/SCN5A and Nav1.8/SCN10A (75 nM tested) (PubMed:22773842). The inhibition is slowly reversible (PubMed:22773842).</text>
</comment>
<comment type="similarity">
    <text evidence="7">Belongs to the conotoxin M superfamily.</text>
</comment>
<dbReference type="EMBL" id="FJ240167">
    <property type="protein sequence ID" value="ACO50772.1"/>
    <property type="molecule type" value="mRNA"/>
</dbReference>
<dbReference type="PDB" id="2LU6">
    <property type="method" value="NMR"/>
    <property type="chains" value="1=66-77"/>
</dbReference>
<dbReference type="PDBsum" id="2LU6"/>
<dbReference type="BMRB" id="C1J5M7"/>
<dbReference type="SMR" id="C1J5M7"/>
<dbReference type="ConoServer" id="3714">
    <property type="toxin name" value="BuIIIC precursor"/>
</dbReference>
<dbReference type="EvolutionaryTrace" id="C1J5M7"/>
<dbReference type="GO" id="GO:0005576">
    <property type="term" value="C:extracellular region"/>
    <property type="evidence" value="ECO:0007669"/>
    <property type="project" value="UniProtKB-SubCell"/>
</dbReference>
<dbReference type="GO" id="GO:0008200">
    <property type="term" value="F:ion channel inhibitor activity"/>
    <property type="evidence" value="ECO:0007669"/>
    <property type="project" value="InterPro"/>
</dbReference>
<dbReference type="GO" id="GO:0017080">
    <property type="term" value="F:sodium channel regulator activity"/>
    <property type="evidence" value="ECO:0007669"/>
    <property type="project" value="UniProtKB-KW"/>
</dbReference>
<dbReference type="GO" id="GO:0090729">
    <property type="term" value="F:toxin activity"/>
    <property type="evidence" value="ECO:0007669"/>
    <property type="project" value="UniProtKB-KW"/>
</dbReference>
<dbReference type="InterPro" id="IPR004214">
    <property type="entry name" value="Conotoxin"/>
</dbReference>
<dbReference type="Pfam" id="PF02950">
    <property type="entry name" value="Conotoxin"/>
    <property type="match status" value="1"/>
</dbReference>
<protein>
    <recommendedName>
        <fullName evidence="6">Mu-conotoxin BuIIIC</fullName>
    </recommendedName>
</protein>
<sequence length="80" mass="9178">MMSKLGVLLTICLLLFPLFALPQDGDQPADRPAERMQDDLSSEQHPLFEKRIVDRCCNKGNGKRGCSRWCRDHSRCCGRR</sequence>
<accession>C1J5M7</accession>